<gene>
    <name type="ordered locus">YPL185W</name>
    <name type="ORF">P2217</name>
</gene>
<protein>
    <recommendedName>
        <fullName>Putative uncharacterized protein YPL185W</fullName>
    </recommendedName>
</protein>
<accession>Q08927</accession>
<comment type="subcellular location">
    <subcellularLocation>
        <location evidence="2">Membrane</location>
        <topology evidence="2">Multi-pass membrane protein</topology>
    </subcellularLocation>
</comment>
<comment type="miscellaneous">
    <text evidence="2">Partially overlaps UIP4.</text>
</comment>
<comment type="caution">
    <text evidence="3">Product of a dubious gene prediction unlikely to encode a functional protein. Because of that it is not part of the S.cerevisiae S288c complete/reference proteome set.</text>
</comment>
<dbReference type="EMBL" id="Z73542">
    <property type="protein sequence ID" value="CAA97898.1"/>
    <property type="molecule type" value="Genomic_DNA"/>
</dbReference>
<dbReference type="EMBL" id="AY693326">
    <property type="protein sequence ID" value="AAT93345.1"/>
    <property type="molecule type" value="Genomic_DNA"/>
</dbReference>
<dbReference type="PIR" id="S65197">
    <property type="entry name" value="S65197"/>
</dbReference>
<dbReference type="PaxDb" id="4932-YPL185W"/>
<dbReference type="EnsemblFungi" id="YPL185W_mRNA">
    <property type="protein sequence ID" value="YPL185W"/>
    <property type="gene ID" value="YPL185W"/>
</dbReference>
<dbReference type="AGR" id="SGD:S000006106"/>
<dbReference type="SGD" id="S000006106">
    <property type="gene designation" value="YPL185W"/>
</dbReference>
<dbReference type="HOGENOM" id="CLU_1929236_0_0_1"/>
<dbReference type="GO" id="GO:0016020">
    <property type="term" value="C:membrane"/>
    <property type="evidence" value="ECO:0007669"/>
    <property type="project" value="UniProtKB-SubCell"/>
</dbReference>
<organism>
    <name type="scientific">Saccharomyces cerevisiae (strain ATCC 204508 / S288c)</name>
    <name type="common">Baker's yeast</name>
    <dbReference type="NCBI Taxonomy" id="559292"/>
    <lineage>
        <taxon>Eukaryota</taxon>
        <taxon>Fungi</taxon>
        <taxon>Dikarya</taxon>
        <taxon>Ascomycota</taxon>
        <taxon>Saccharomycotina</taxon>
        <taxon>Saccharomycetes</taxon>
        <taxon>Saccharomycetales</taxon>
        <taxon>Saccharomycetaceae</taxon>
        <taxon>Saccharomyces</taxon>
    </lineage>
</organism>
<reference key="1">
    <citation type="journal article" date="1997" name="Nature">
        <title>The nucleotide sequence of Saccharomyces cerevisiae chromosome XVI.</title>
        <authorList>
            <person name="Bussey H."/>
            <person name="Storms R.K."/>
            <person name="Ahmed A."/>
            <person name="Albermann K."/>
            <person name="Allen E."/>
            <person name="Ansorge W."/>
            <person name="Araujo R."/>
            <person name="Aparicio A."/>
            <person name="Barrell B.G."/>
            <person name="Badcock K."/>
            <person name="Benes V."/>
            <person name="Botstein D."/>
            <person name="Bowman S."/>
            <person name="Brueckner M."/>
            <person name="Carpenter J."/>
            <person name="Cherry J.M."/>
            <person name="Chung E."/>
            <person name="Churcher C.M."/>
            <person name="Coster F."/>
            <person name="Davis K."/>
            <person name="Davis R.W."/>
            <person name="Dietrich F.S."/>
            <person name="Delius H."/>
            <person name="DiPaolo T."/>
            <person name="Dubois E."/>
            <person name="Duesterhoeft A."/>
            <person name="Duncan M."/>
            <person name="Floeth M."/>
            <person name="Fortin N."/>
            <person name="Friesen J.D."/>
            <person name="Fritz C."/>
            <person name="Goffeau A."/>
            <person name="Hall J."/>
            <person name="Hebling U."/>
            <person name="Heumann K."/>
            <person name="Hilbert H."/>
            <person name="Hillier L.W."/>
            <person name="Hunicke-Smith S."/>
            <person name="Hyman R.W."/>
            <person name="Johnston M."/>
            <person name="Kalman S."/>
            <person name="Kleine K."/>
            <person name="Komp C."/>
            <person name="Kurdi O."/>
            <person name="Lashkari D."/>
            <person name="Lew H."/>
            <person name="Lin A."/>
            <person name="Lin D."/>
            <person name="Louis E.J."/>
            <person name="Marathe R."/>
            <person name="Messenguy F."/>
            <person name="Mewes H.-W."/>
            <person name="Mirtipati S."/>
            <person name="Moestl D."/>
            <person name="Mueller-Auer S."/>
            <person name="Namath A."/>
            <person name="Nentwich U."/>
            <person name="Oefner P."/>
            <person name="Pearson D."/>
            <person name="Petel F.X."/>
            <person name="Pohl T.M."/>
            <person name="Purnelle B."/>
            <person name="Rajandream M.A."/>
            <person name="Rechmann S."/>
            <person name="Rieger M."/>
            <person name="Riles L."/>
            <person name="Roberts D."/>
            <person name="Schaefer M."/>
            <person name="Scharfe M."/>
            <person name="Scherens B."/>
            <person name="Schramm S."/>
            <person name="Schroeder M."/>
            <person name="Sdicu A.-M."/>
            <person name="Tettelin H."/>
            <person name="Urrestarazu L.A."/>
            <person name="Ushinsky S."/>
            <person name="Vierendeels F."/>
            <person name="Vissers S."/>
            <person name="Voss H."/>
            <person name="Walsh S.V."/>
            <person name="Wambutt R."/>
            <person name="Wang Y."/>
            <person name="Wedler E."/>
            <person name="Wedler H."/>
            <person name="Winnett E."/>
            <person name="Zhong W.-W."/>
            <person name="Zollner A."/>
            <person name="Vo D.H."/>
            <person name="Hani J."/>
        </authorList>
    </citation>
    <scope>NUCLEOTIDE SEQUENCE [LARGE SCALE GENOMIC DNA]</scope>
    <source>
        <strain>ATCC 204508 / S288c</strain>
    </source>
</reference>
<reference key="2">
    <citation type="journal article" date="2014" name="G3 (Bethesda)">
        <title>The reference genome sequence of Saccharomyces cerevisiae: Then and now.</title>
        <authorList>
            <person name="Engel S.R."/>
            <person name="Dietrich F.S."/>
            <person name="Fisk D.G."/>
            <person name="Binkley G."/>
            <person name="Balakrishnan R."/>
            <person name="Costanzo M.C."/>
            <person name="Dwight S.S."/>
            <person name="Hitz B.C."/>
            <person name="Karra K."/>
            <person name="Nash R.S."/>
            <person name="Weng S."/>
            <person name="Wong E.D."/>
            <person name="Lloyd P."/>
            <person name="Skrzypek M.S."/>
            <person name="Miyasato S.R."/>
            <person name="Simison M."/>
            <person name="Cherry J.M."/>
        </authorList>
    </citation>
    <scope>GENOME REANNOTATION</scope>
    <source>
        <strain>ATCC 204508 / S288c</strain>
    </source>
</reference>
<reference key="3">
    <citation type="journal article" date="2007" name="Genome Res.">
        <title>Approaching a complete repository of sequence-verified protein-encoding clones for Saccharomyces cerevisiae.</title>
        <authorList>
            <person name="Hu Y."/>
            <person name="Rolfs A."/>
            <person name="Bhullar B."/>
            <person name="Murthy T.V.S."/>
            <person name="Zhu C."/>
            <person name="Berger M.F."/>
            <person name="Camargo A.A."/>
            <person name="Kelley F."/>
            <person name="McCarron S."/>
            <person name="Jepson D."/>
            <person name="Richardson A."/>
            <person name="Raphael J."/>
            <person name="Moreira D."/>
            <person name="Taycher E."/>
            <person name="Zuo D."/>
            <person name="Mohr S."/>
            <person name="Kane M.F."/>
            <person name="Williamson J."/>
            <person name="Simpson A.J.G."/>
            <person name="Bulyk M.L."/>
            <person name="Harlow E."/>
            <person name="Marsischky G."/>
            <person name="Kolodner R.D."/>
            <person name="LaBaer J."/>
        </authorList>
    </citation>
    <scope>NUCLEOTIDE SEQUENCE [GENOMIC DNA]</scope>
    <source>
        <strain>ATCC 204508 / S288c</strain>
    </source>
</reference>
<evidence type="ECO:0000255" key="1"/>
<evidence type="ECO:0000305" key="2"/>
<evidence type="ECO:0000305" key="3">
    <source>
    </source>
</evidence>
<sequence>MYLIFIIMFGYRRFIKFVFPFPATGIYFHGYTFPIGKLPSDLQLWKVFRRMIKYNGDHYLVALPILMLQPSMYVCTYVCKEVDIEKESRGERERTKKLKLFEIVLYYLSVCTPYWWNITAKFFIPFSHSSP</sequence>
<name>YP185_YEAST</name>
<keyword id="KW-0472">Membrane</keyword>
<keyword id="KW-0812">Transmembrane</keyword>
<keyword id="KW-1133">Transmembrane helix</keyword>
<feature type="chain" id="PRO_0000299807" description="Putative uncharacterized protein YPL185W">
    <location>
        <begin position="1"/>
        <end position="131"/>
    </location>
</feature>
<feature type="transmembrane region" description="Helical" evidence="1">
    <location>
        <begin position="13"/>
        <end position="35"/>
    </location>
</feature>
<feature type="transmembrane region" description="Helical" evidence="1">
    <location>
        <begin position="60"/>
        <end position="79"/>
    </location>
</feature>
<feature type="transmembrane region" description="Helical" evidence="1">
    <location>
        <begin position="100"/>
        <end position="119"/>
    </location>
</feature>
<proteinExistence type="uncertain"/>